<name>OLA1_RAT</name>
<feature type="chain" id="PRO_0000354698" description="Obg-like ATPase 1">
    <location>
        <begin position="1"/>
        <end position="396"/>
    </location>
</feature>
<feature type="domain" description="OBG-type G">
    <location>
        <begin position="23"/>
        <end position="283"/>
    </location>
</feature>
<feature type="domain" description="TGS" evidence="4">
    <location>
        <begin position="304"/>
        <end position="387"/>
    </location>
</feature>
<feature type="short sequence motif" description="Nuclear export signal" evidence="3">
    <location>
        <begin position="267"/>
        <end position="274"/>
    </location>
</feature>
<feature type="binding site" evidence="3">
    <location>
        <begin position="32"/>
        <end position="37"/>
    </location>
    <ligand>
        <name>ATP</name>
        <dbReference type="ChEBI" id="CHEBI:30616"/>
    </ligand>
</feature>
<feature type="binding site" evidence="1">
    <location>
        <position position="36"/>
    </location>
    <ligand>
        <name>Mg(2+)</name>
        <dbReference type="ChEBI" id="CHEBI:18420"/>
    </ligand>
</feature>
<feature type="binding site" evidence="1">
    <location>
        <position position="56"/>
    </location>
    <ligand>
        <name>Mg(2+)</name>
        <dbReference type="ChEBI" id="CHEBI:18420"/>
    </ligand>
</feature>
<feature type="binding site" evidence="3">
    <location>
        <position position="231"/>
    </location>
    <ligand>
        <name>ATP</name>
        <dbReference type="ChEBI" id="CHEBI:30616"/>
    </ligand>
</feature>
<feature type="modified residue" description="N6-acetyllysine" evidence="2">
    <location>
        <position position="294"/>
    </location>
</feature>
<dbReference type="EMBL" id="BC127457">
    <property type="protein sequence ID" value="AAI27458.1"/>
    <property type="molecule type" value="mRNA"/>
</dbReference>
<dbReference type="RefSeq" id="NP_001029099.1">
    <property type="nucleotide sequence ID" value="NM_001033927.1"/>
</dbReference>
<dbReference type="SMR" id="A0JPJ7"/>
<dbReference type="BioGRID" id="255376">
    <property type="interactions" value="1"/>
</dbReference>
<dbReference type="FunCoup" id="A0JPJ7">
    <property type="interactions" value="2978"/>
</dbReference>
<dbReference type="IntAct" id="A0JPJ7">
    <property type="interactions" value="1"/>
</dbReference>
<dbReference type="STRING" id="10116.ENSRNOP00000026040"/>
<dbReference type="iPTMnet" id="A0JPJ7"/>
<dbReference type="PhosphoSitePlus" id="A0JPJ7"/>
<dbReference type="SwissPalm" id="A0JPJ7"/>
<dbReference type="jPOST" id="A0JPJ7"/>
<dbReference type="PaxDb" id="10116-ENSRNOP00000026040"/>
<dbReference type="PeptideAtlas" id="A0JPJ7"/>
<dbReference type="Ensembl" id="ENSRNOT00000026040.6">
    <property type="protein sequence ID" value="ENSRNOP00000026040.4"/>
    <property type="gene ID" value="ENSRNOG00000019047.7"/>
</dbReference>
<dbReference type="GeneID" id="296488"/>
<dbReference type="KEGG" id="rno:296488"/>
<dbReference type="UCSC" id="RGD:1307982">
    <property type="organism name" value="rat"/>
</dbReference>
<dbReference type="AGR" id="RGD:1307982"/>
<dbReference type="CTD" id="29789"/>
<dbReference type="RGD" id="1307982">
    <property type="gene designation" value="Ola1"/>
</dbReference>
<dbReference type="eggNOG" id="KOG1491">
    <property type="taxonomic scope" value="Eukaryota"/>
</dbReference>
<dbReference type="GeneTree" id="ENSGT00390000000673"/>
<dbReference type="HOGENOM" id="CLU_018395_1_0_1"/>
<dbReference type="InParanoid" id="A0JPJ7"/>
<dbReference type="OMA" id="VLRCFDN"/>
<dbReference type="OrthoDB" id="424823at2759"/>
<dbReference type="PhylomeDB" id="A0JPJ7"/>
<dbReference type="TreeFam" id="TF300774"/>
<dbReference type="Reactome" id="R-RNO-114608">
    <property type="pathway name" value="Platelet degranulation"/>
</dbReference>
<dbReference type="PRO" id="PR:A0JPJ7"/>
<dbReference type="Proteomes" id="UP000002494">
    <property type="component" value="Chromosome 3"/>
</dbReference>
<dbReference type="Bgee" id="ENSRNOG00000019047">
    <property type="expression patterns" value="Expressed in Ammon's horn and 20 other cell types or tissues"/>
</dbReference>
<dbReference type="GO" id="GO:0005813">
    <property type="term" value="C:centrosome"/>
    <property type="evidence" value="ECO:0007669"/>
    <property type="project" value="Ensembl"/>
</dbReference>
<dbReference type="GO" id="GO:0005737">
    <property type="term" value="C:cytoplasm"/>
    <property type="evidence" value="ECO:0000318"/>
    <property type="project" value="GO_Central"/>
</dbReference>
<dbReference type="GO" id="GO:0005829">
    <property type="term" value="C:cytosol"/>
    <property type="evidence" value="ECO:0007669"/>
    <property type="project" value="Ensembl"/>
</dbReference>
<dbReference type="GO" id="GO:0005730">
    <property type="term" value="C:nucleolus"/>
    <property type="evidence" value="ECO:0007669"/>
    <property type="project" value="UniProtKB-SubCell"/>
</dbReference>
<dbReference type="GO" id="GO:0005524">
    <property type="term" value="F:ATP binding"/>
    <property type="evidence" value="ECO:0000266"/>
    <property type="project" value="RGD"/>
</dbReference>
<dbReference type="GO" id="GO:0016887">
    <property type="term" value="F:ATP hydrolysis activity"/>
    <property type="evidence" value="ECO:0000266"/>
    <property type="project" value="RGD"/>
</dbReference>
<dbReference type="GO" id="GO:0005525">
    <property type="term" value="F:GTP binding"/>
    <property type="evidence" value="ECO:0007669"/>
    <property type="project" value="InterPro"/>
</dbReference>
<dbReference type="GO" id="GO:0046872">
    <property type="term" value="F:metal ion binding"/>
    <property type="evidence" value="ECO:0007669"/>
    <property type="project" value="UniProtKB-KW"/>
</dbReference>
<dbReference type="GO" id="GO:0043023">
    <property type="term" value="F:ribosomal large subunit binding"/>
    <property type="evidence" value="ECO:0007669"/>
    <property type="project" value="UniProtKB-UniRule"/>
</dbReference>
<dbReference type="GO" id="GO:0046034">
    <property type="term" value="P:ATP metabolic process"/>
    <property type="evidence" value="ECO:0000266"/>
    <property type="project" value="RGD"/>
</dbReference>
<dbReference type="CDD" id="cd04867">
    <property type="entry name" value="TGS_YchF_OLA1"/>
    <property type="match status" value="1"/>
</dbReference>
<dbReference type="CDD" id="cd01900">
    <property type="entry name" value="YchF"/>
    <property type="match status" value="1"/>
</dbReference>
<dbReference type="FunFam" id="1.10.150.300:FF:000003">
    <property type="entry name" value="Obg-like ATPase 1"/>
    <property type="match status" value="1"/>
</dbReference>
<dbReference type="FunFam" id="3.10.20.30:FF:000029">
    <property type="entry name" value="Obg-like ATPase 1"/>
    <property type="match status" value="1"/>
</dbReference>
<dbReference type="Gene3D" id="3.10.20.30">
    <property type="match status" value="1"/>
</dbReference>
<dbReference type="Gene3D" id="3.40.50.300">
    <property type="entry name" value="P-loop containing nucleotide triphosphate hydrolases"/>
    <property type="match status" value="1"/>
</dbReference>
<dbReference type="Gene3D" id="1.10.150.300">
    <property type="entry name" value="TGS-like domain"/>
    <property type="match status" value="1"/>
</dbReference>
<dbReference type="HAMAP" id="MF_00944">
    <property type="entry name" value="YchF_OLA1_ATPase"/>
    <property type="match status" value="1"/>
</dbReference>
<dbReference type="InterPro" id="IPR004396">
    <property type="entry name" value="ATPase_YchF/OLA1"/>
</dbReference>
<dbReference type="InterPro" id="IPR012675">
    <property type="entry name" value="Beta-grasp_dom_sf"/>
</dbReference>
<dbReference type="InterPro" id="IPR031167">
    <property type="entry name" value="G_OBG"/>
</dbReference>
<dbReference type="InterPro" id="IPR006073">
    <property type="entry name" value="GTP-bd"/>
</dbReference>
<dbReference type="InterPro" id="IPR027417">
    <property type="entry name" value="P-loop_NTPase"/>
</dbReference>
<dbReference type="InterPro" id="IPR004095">
    <property type="entry name" value="TGS"/>
</dbReference>
<dbReference type="InterPro" id="IPR012676">
    <property type="entry name" value="TGS-like"/>
</dbReference>
<dbReference type="InterPro" id="IPR023192">
    <property type="entry name" value="TGS-like_dom_sf"/>
</dbReference>
<dbReference type="InterPro" id="IPR013029">
    <property type="entry name" value="YchF_C"/>
</dbReference>
<dbReference type="InterPro" id="IPR041706">
    <property type="entry name" value="YchF_N"/>
</dbReference>
<dbReference type="NCBIfam" id="TIGR00092">
    <property type="entry name" value="redox-regulated ATPase YchF"/>
    <property type="match status" value="1"/>
</dbReference>
<dbReference type="PANTHER" id="PTHR23305">
    <property type="entry name" value="OBG GTPASE FAMILY"/>
    <property type="match status" value="1"/>
</dbReference>
<dbReference type="PANTHER" id="PTHR23305:SF11">
    <property type="entry name" value="OBG-LIKE ATPASE 1"/>
    <property type="match status" value="1"/>
</dbReference>
<dbReference type="Pfam" id="PF01926">
    <property type="entry name" value="MMR_HSR1"/>
    <property type="match status" value="1"/>
</dbReference>
<dbReference type="Pfam" id="PF06071">
    <property type="entry name" value="YchF-GTPase_C"/>
    <property type="match status" value="1"/>
</dbReference>
<dbReference type="PIRSF" id="PIRSF006641">
    <property type="entry name" value="CHP00092"/>
    <property type="match status" value="1"/>
</dbReference>
<dbReference type="PRINTS" id="PR00326">
    <property type="entry name" value="GTP1OBG"/>
</dbReference>
<dbReference type="SUPFAM" id="SSF52540">
    <property type="entry name" value="P-loop containing nucleoside triphosphate hydrolases"/>
    <property type="match status" value="1"/>
</dbReference>
<dbReference type="SUPFAM" id="SSF81271">
    <property type="entry name" value="TGS-like"/>
    <property type="match status" value="1"/>
</dbReference>
<dbReference type="PROSITE" id="PS51710">
    <property type="entry name" value="G_OBG"/>
    <property type="match status" value="1"/>
</dbReference>
<dbReference type="PROSITE" id="PS51880">
    <property type="entry name" value="TGS"/>
    <property type="match status" value="1"/>
</dbReference>
<reference key="1">
    <citation type="journal article" date="2004" name="Genome Res.">
        <title>The status, quality, and expansion of the NIH full-length cDNA project: the Mammalian Gene Collection (MGC).</title>
        <authorList>
            <consortium name="The MGC Project Team"/>
        </authorList>
    </citation>
    <scope>NUCLEOTIDE SEQUENCE [LARGE SCALE MRNA]</scope>
    <source>
        <tissue>Brain</tissue>
    </source>
</reference>
<comment type="function">
    <text evidence="3">Hydrolyzes ATP, and can also hydrolyze GTP with lower efficiency. Has lower affinity for GTP.</text>
</comment>
<comment type="cofactor">
    <cofactor evidence="1">
        <name>Mg(2+)</name>
        <dbReference type="ChEBI" id="CHEBI:18420"/>
    </cofactor>
</comment>
<comment type="subunit">
    <text evidence="3">Monomer.</text>
</comment>
<comment type="subcellular location">
    <subcellularLocation>
        <location evidence="3">Cytoplasm</location>
    </subcellularLocation>
    <subcellularLocation>
        <location evidence="3">Nucleus</location>
    </subcellularLocation>
    <subcellularLocation>
        <location evidence="3">Nucleus</location>
        <location evidence="3">Nucleolus</location>
    </subcellularLocation>
    <text evidence="3">Predominantly cytoplasmic, shuttles between the nucleus and the cytoplasm.</text>
</comment>
<comment type="similarity">
    <text evidence="3">Belongs to the TRAFAC class OBG-HflX-like GTPase superfamily. OBG GTPase family. YchF/OLA1 subfamily.</text>
</comment>
<gene>
    <name type="primary">Ola1</name>
</gene>
<protein>
    <recommendedName>
        <fullName evidence="3">Obg-like ATPase 1</fullName>
    </recommendedName>
</protein>
<evidence type="ECO:0000250" key="1"/>
<evidence type="ECO:0000250" key="2">
    <source>
        <dbReference type="UniProtKB" id="Q9NTK5"/>
    </source>
</evidence>
<evidence type="ECO:0000255" key="3">
    <source>
        <dbReference type="HAMAP-Rule" id="MF_03167"/>
    </source>
</evidence>
<evidence type="ECO:0000255" key="4">
    <source>
        <dbReference type="PROSITE-ProRule" id="PRU01228"/>
    </source>
</evidence>
<organism>
    <name type="scientific">Rattus norvegicus</name>
    <name type="common">Rat</name>
    <dbReference type="NCBI Taxonomy" id="10116"/>
    <lineage>
        <taxon>Eukaryota</taxon>
        <taxon>Metazoa</taxon>
        <taxon>Chordata</taxon>
        <taxon>Craniata</taxon>
        <taxon>Vertebrata</taxon>
        <taxon>Euteleostomi</taxon>
        <taxon>Mammalia</taxon>
        <taxon>Eutheria</taxon>
        <taxon>Euarchontoglires</taxon>
        <taxon>Glires</taxon>
        <taxon>Rodentia</taxon>
        <taxon>Myomorpha</taxon>
        <taxon>Muroidea</taxon>
        <taxon>Muridae</taxon>
        <taxon>Murinae</taxon>
        <taxon>Rattus</taxon>
    </lineage>
</organism>
<proteinExistence type="evidence at transcript level"/>
<keyword id="KW-0007">Acetylation</keyword>
<keyword id="KW-0067">ATP-binding</keyword>
<keyword id="KW-0963">Cytoplasm</keyword>
<keyword id="KW-0378">Hydrolase</keyword>
<keyword id="KW-0460">Magnesium</keyword>
<keyword id="KW-0479">Metal-binding</keyword>
<keyword id="KW-0547">Nucleotide-binding</keyword>
<keyword id="KW-0539">Nucleus</keyword>
<keyword id="KW-1185">Reference proteome</keyword>
<accession>A0JPJ7</accession>
<sequence length="396" mass="44535">MPPKKGGDGLKPPPIIGRFGTSLKIGIVGLPNVGKSTFFNVLTNSQASAENFPFCTIDPNESRVPVPDERFDFLCQCHKPASKIPAFLNVVDIAGLVKGAHNGQGLGNAFLSHISACDGIFHLTRAFEDDDITHVEGSVDPIRDIEIIHEELQLKDEEMIGPIIDKLEKVAVRGGDKKLKPEYDIMCKVKSWVIDQKKPVRFYHDWNDKEIEVLNKHLLLTSKPMVYLVNLSEKDYIRKKNKWLIKIKEWVDKSDPGALVIPFSGALELKLQELSAEERQKYLEANMTQSALPKIIKAGFAALQLEYFFTAGPDEVRAWTIRKGTKAPQAAGKIHTDFEKGFIMAEVMKYDDFKDEGSENAVKAAGKYRQQGRNYIVEDGDIIFFKFNTPQQSKKK</sequence>